<organism>
    <name type="scientific">Shigella sonnei (strain Ss046)</name>
    <dbReference type="NCBI Taxonomy" id="300269"/>
    <lineage>
        <taxon>Bacteria</taxon>
        <taxon>Pseudomonadati</taxon>
        <taxon>Pseudomonadota</taxon>
        <taxon>Gammaproteobacteria</taxon>
        <taxon>Enterobacterales</taxon>
        <taxon>Enterobacteriaceae</taxon>
        <taxon>Shigella</taxon>
    </lineage>
</organism>
<reference key="1">
    <citation type="journal article" date="2005" name="Nucleic Acids Res.">
        <title>Genome dynamics and diversity of Shigella species, the etiologic agents of bacillary dysentery.</title>
        <authorList>
            <person name="Yang F."/>
            <person name="Yang J."/>
            <person name="Zhang X."/>
            <person name="Chen L."/>
            <person name="Jiang Y."/>
            <person name="Yan Y."/>
            <person name="Tang X."/>
            <person name="Wang J."/>
            <person name="Xiong Z."/>
            <person name="Dong J."/>
            <person name="Xue Y."/>
            <person name="Zhu Y."/>
            <person name="Xu X."/>
            <person name="Sun L."/>
            <person name="Chen S."/>
            <person name="Nie H."/>
            <person name="Peng J."/>
            <person name="Xu J."/>
            <person name="Wang Y."/>
            <person name="Yuan Z."/>
            <person name="Wen Y."/>
            <person name="Yao Z."/>
            <person name="Shen Y."/>
            <person name="Qiang B."/>
            <person name="Hou Y."/>
            <person name="Yu J."/>
            <person name="Jin Q."/>
        </authorList>
    </citation>
    <scope>NUCLEOTIDE SEQUENCE [LARGE SCALE GENOMIC DNA]</scope>
    <source>
        <strain>Ss046</strain>
    </source>
</reference>
<evidence type="ECO:0000255" key="1">
    <source>
        <dbReference type="HAMAP-Rule" id="MF_00126"/>
    </source>
</evidence>
<sequence length="554" mass="63478">MSEAEARPTNFIRQIIDEDLASGKHTTVHTRFPPEPNGYLHIGHAKSICLNFGIAQDYKGQCNLRFDDTNPVKEDIEYVESIKNDVEWLGFHWSGNVRYSSDYFDQLHAYAIELINKGLAYVDELTPEQIREYRGTLTQPGKNSPYRDRSVEENLALFEKMRAGGFEEGKACLRAKIDMASPFIVMRDPVLYRIKFAEHHQTGNKWCIYPMYDFTHCISDALEGITHSLCTLEFQDNRRLYDWVLDNITIPVHPRQYEFSRLNLEYTVMSKRKLNLLVTDKHVEGWDDPRMPTISGLRRRGYTAASIREFCKRIGVTKQDNTIEMASLESCIREDLNENAPRAMAVIDPVKLVIENYQGEGEMVTMPNHPNKPEMGSRQVPFSGEIWIDRADFREEANKQYKRLVLGKEVRLRNAYVIKAERVEKDAEGNITTIFCTYDADTLSKDPADGRKVKGVIHWVSAAHALPVEIRLYDRLFSVPNPGAADDFLSVINPESLVIKQGFAEPSLKDAVAGKAFQFEREGYFCLDSRHSTAEKPVFNRTVGLRDTWAKVGE</sequence>
<keyword id="KW-0030">Aminoacyl-tRNA synthetase</keyword>
<keyword id="KW-0067">ATP-binding</keyword>
<keyword id="KW-0963">Cytoplasm</keyword>
<keyword id="KW-0436">Ligase</keyword>
<keyword id="KW-0547">Nucleotide-binding</keyword>
<keyword id="KW-0648">Protein biosynthesis</keyword>
<keyword id="KW-1185">Reference proteome</keyword>
<comment type="catalytic activity">
    <reaction evidence="1">
        <text>tRNA(Gln) + L-glutamine + ATP = L-glutaminyl-tRNA(Gln) + AMP + diphosphate</text>
        <dbReference type="Rhea" id="RHEA:20121"/>
        <dbReference type="Rhea" id="RHEA-COMP:9662"/>
        <dbReference type="Rhea" id="RHEA-COMP:9681"/>
        <dbReference type="ChEBI" id="CHEBI:30616"/>
        <dbReference type="ChEBI" id="CHEBI:33019"/>
        <dbReference type="ChEBI" id="CHEBI:58359"/>
        <dbReference type="ChEBI" id="CHEBI:78442"/>
        <dbReference type="ChEBI" id="CHEBI:78521"/>
        <dbReference type="ChEBI" id="CHEBI:456215"/>
        <dbReference type="EC" id="6.1.1.18"/>
    </reaction>
</comment>
<comment type="subunit">
    <text evidence="1">Monomer.</text>
</comment>
<comment type="subcellular location">
    <subcellularLocation>
        <location evidence="1">Cytoplasm</location>
    </subcellularLocation>
</comment>
<comment type="similarity">
    <text evidence="1">Belongs to the class-I aminoacyl-tRNA synthetase family.</text>
</comment>
<name>SYQ_SHISS</name>
<protein>
    <recommendedName>
        <fullName evidence="1">Glutamine--tRNA ligase</fullName>
        <ecNumber evidence="1">6.1.1.18</ecNumber>
    </recommendedName>
    <alternativeName>
        <fullName evidence="1">Glutaminyl-tRNA synthetase</fullName>
        <shortName evidence="1">GlnRS</shortName>
    </alternativeName>
</protein>
<accession>Q3Z4C0</accession>
<proteinExistence type="inferred from homology"/>
<feature type="chain" id="PRO_0000242877" description="Glutamine--tRNA ligase">
    <location>
        <begin position="1"/>
        <end position="554"/>
    </location>
</feature>
<feature type="region of interest" description="Interaction with tRNA" evidence="1">
    <location>
        <begin position="317"/>
        <end position="324"/>
    </location>
</feature>
<feature type="short sequence motif" description="'HIGH' region" evidence="1">
    <location>
        <begin position="34"/>
        <end position="44"/>
    </location>
</feature>
<feature type="short sequence motif" description="'KMSKS' region" evidence="1">
    <location>
        <begin position="268"/>
        <end position="272"/>
    </location>
</feature>
<feature type="binding site" evidence="1">
    <location>
        <begin position="35"/>
        <end position="37"/>
    </location>
    <ligand>
        <name>ATP</name>
        <dbReference type="ChEBI" id="CHEBI:30616"/>
    </ligand>
</feature>
<feature type="binding site" evidence="1">
    <location>
        <begin position="41"/>
        <end position="47"/>
    </location>
    <ligand>
        <name>ATP</name>
        <dbReference type="ChEBI" id="CHEBI:30616"/>
    </ligand>
</feature>
<feature type="binding site" evidence="1">
    <location>
        <position position="67"/>
    </location>
    <ligand>
        <name>L-glutamine</name>
        <dbReference type="ChEBI" id="CHEBI:58359"/>
    </ligand>
</feature>
<feature type="binding site" evidence="1">
    <location>
        <position position="212"/>
    </location>
    <ligand>
        <name>L-glutamine</name>
        <dbReference type="ChEBI" id="CHEBI:58359"/>
    </ligand>
</feature>
<feature type="binding site" evidence="1">
    <location>
        <position position="231"/>
    </location>
    <ligand>
        <name>ATP</name>
        <dbReference type="ChEBI" id="CHEBI:30616"/>
    </ligand>
</feature>
<feature type="binding site" evidence="1">
    <location>
        <begin position="261"/>
        <end position="262"/>
    </location>
    <ligand>
        <name>ATP</name>
        <dbReference type="ChEBI" id="CHEBI:30616"/>
    </ligand>
</feature>
<feature type="binding site" evidence="1">
    <location>
        <begin position="269"/>
        <end position="271"/>
    </location>
    <ligand>
        <name>ATP</name>
        <dbReference type="ChEBI" id="CHEBI:30616"/>
    </ligand>
</feature>
<dbReference type="EC" id="6.1.1.18" evidence="1"/>
<dbReference type="EMBL" id="CP000038">
    <property type="protein sequence ID" value="AAZ87392.1"/>
    <property type="molecule type" value="Genomic_DNA"/>
</dbReference>
<dbReference type="RefSeq" id="WP_001287154.1">
    <property type="nucleotide sequence ID" value="NC_007384.1"/>
</dbReference>
<dbReference type="SMR" id="Q3Z4C0"/>
<dbReference type="GeneID" id="93776805"/>
<dbReference type="KEGG" id="ssn:SSON_0634"/>
<dbReference type="HOGENOM" id="CLU_001882_2_3_6"/>
<dbReference type="Proteomes" id="UP000002529">
    <property type="component" value="Chromosome"/>
</dbReference>
<dbReference type="GO" id="GO:0005829">
    <property type="term" value="C:cytosol"/>
    <property type="evidence" value="ECO:0007669"/>
    <property type="project" value="TreeGrafter"/>
</dbReference>
<dbReference type="GO" id="GO:0005524">
    <property type="term" value="F:ATP binding"/>
    <property type="evidence" value="ECO:0007669"/>
    <property type="project" value="UniProtKB-UniRule"/>
</dbReference>
<dbReference type="GO" id="GO:0004819">
    <property type="term" value="F:glutamine-tRNA ligase activity"/>
    <property type="evidence" value="ECO:0007669"/>
    <property type="project" value="UniProtKB-UniRule"/>
</dbReference>
<dbReference type="GO" id="GO:0006425">
    <property type="term" value="P:glutaminyl-tRNA aminoacylation"/>
    <property type="evidence" value="ECO:0007669"/>
    <property type="project" value="InterPro"/>
</dbReference>
<dbReference type="GO" id="GO:0006424">
    <property type="term" value="P:glutamyl-tRNA aminoacylation"/>
    <property type="evidence" value="ECO:0007669"/>
    <property type="project" value="UniProtKB-UniRule"/>
</dbReference>
<dbReference type="CDD" id="cd00807">
    <property type="entry name" value="GlnRS_core"/>
    <property type="match status" value="1"/>
</dbReference>
<dbReference type="FunFam" id="1.10.1160.10:FF:000001">
    <property type="entry name" value="Glutamine--tRNA ligase"/>
    <property type="match status" value="1"/>
</dbReference>
<dbReference type="FunFam" id="2.40.240.10:FF:000001">
    <property type="entry name" value="Glutamine--tRNA ligase"/>
    <property type="match status" value="1"/>
</dbReference>
<dbReference type="FunFam" id="2.40.240.10:FF:000003">
    <property type="entry name" value="Glutamine--tRNA ligase"/>
    <property type="match status" value="1"/>
</dbReference>
<dbReference type="FunFam" id="3.90.800.10:FF:000001">
    <property type="entry name" value="Glutamine--tRNA ligase"/>
    <property type="match status" value="1"/>
</dbReference>
<dbReference type="FunFam" id="3.40.50.620:FF:000037">
    <property type="entry name" value="Glutamine--tRNA ligase cytoplasmic"/>
    <property type="match status" value="1"/>
</dbReference>
<dbReference type="Gene3D" id="1.10.1160.10">
    <property type="entry name" value="Glutamyl-trna Synthetase, Domain 2"/>
    <property type="match status" value="1"/>
</dbReference>
<dbReference type="Gene3D" id="3.90.800.10">
    <property type="entry name" value="Glutamyl-tRNA Synthetase, Domain 3"/>
    <property type="match status" value="1"/>
</dbReference>
<dbReference type="Gene3D" id="3.40.50.620">
    <property type="entry name" value="HUPs"/>
    <property type="match status" value="1"/>
</dbReference>
<dbReference type="Gene3D" id="2.40.240.10">
    <property type="entry name" value="Ribosomal Protein L25, Chain P"/>
    <property type="match status" value="2"/>
</dbReference>
<dbReference type="HAMAP" id="MF_00126">
    <property type="entry name" value="Gln_tRNA_synth"/>
    <property type="match status" value="1"/>
</dbReference>
<dbReference type="InterPro" id="IPR001412">
    <property type="entry name" value="aa-tRNA-synth_I_CS"/>
</dbReference>
<dbReference type="InterPro" id="IPR004514">
    <property type="entry name" value="Gln-tRNA-synth"/>
</dbReference>
<dbReference type="InterPro" id="IPR050132">
    <property type="entry name" value="Gln/Glu-tRNA_Ligase"/>
</dbReference>
<dbReference type="InterPro" id="IPR022861">
    <property type="entry name" value="Gln_tRNA_ligase_bac"/>
</dbReference>
<dbReference type="InterPro" id="IPR000924">
    <property type="entry name" value="Glu/Gln-tRNA-synth"/>
</dbReference>
<dbReference type="InterPro" id="IPR020058">
    <property type="entry name" value="Glu/Gln-tRNA-synth_Ib_cat-dom"/>
</dbReference>
<dbReference type="InterPro" id="IPR020059">
    <property type="entry name" value="Glu/Gln-tRNA-synth_Ib_codon-bd"/>
</dbReference>
<dbReference type="InterPro" id="IPR020061">
    <property type="entry name" value="Glu_tRNA_lig_a-bdl"/>
</dbReference>
<dbReference type="InterPro" id="IPR020056">
    <property type="entry name" value="Rbsml_bL25/Gln-tRNA_synth_N"/>
</dbReference>
<dbReference type="InterPro" id="IPR011035">
    <property type="entry name" value="Ribosomal_bL25/Gln-tRNA_synth"/>
</dbReference>
<dbReference type="InterPro" id="IPR014729">
    <property type="entry name" value="Rossmann-like_a/b/a_fold"/>
</dbReference>
<dbReference type="InterPro" id="IPR049437">
    <property type="entry name" value="tRNA-synt_1c_C2"/>
</dbReference>
<dbReference type="NCBIfam" id="TIGR00440">
    <property type="entry name" value="glnS"/>
    <property type="match status" value="1"/>
</dbReference>
<dbReference type="NCBIfam" id="NF011291">
    <property type="entry name" value="PRK14703.1"/>
    <property type="match status" value="1"/>
</dbReference>
<dbReference type="PANTHER" id="PTHR43097:SF5">
    <property type="entry name" value="GLUTAMATE--TRNA LIGASE"/>
    <property type="match status" value="1"/>
</dbReference>
<dbReference type="PANTHER" id="PTHR43097">
    <property type="entry name" value="GLUTAMINE-TRNA LIGASE"/>
    <property type="match status" value="1"/>
</dbReference>
<dbReference type="Pfam" id="PF00749">
    <property type="entry name" value="tRNA-synt_1c"/>
    <property type="match status" value="1"/>
</dbReference>
<dbReference type="Pfam" id="PF03950">
    <property type="entry name" value="tRNA-synt_1c_C"/>
    <property type="match status" value="1"/>
</dbReference>
<dbReference type="Pfam" id="PF20974">
    <property type="entry name" value="tRNA-synt_1c_C2"/>
    <property type="match status" value="1"/>
</dbReference>
<dbReference type="PRINTS" id="PR00987">
    <property type="entry name" value="TRNASYNTHGLU"/>
</dbReference>
<dbReference type="SUPFAM" id="SSF52374">
    <property type="entry name" value="Nucleotidylyl transferase"/>
    <property type="match status" value="1"/>
</dbReference>
<dbReference type="SUPFAM" id="SSF50715">
    <property type="entry name" value="Ribosomal protein L25-like"/>
    <property type="match status" value="1"/>
</dbReference>
<dbReference type="PROSITE" id="PS00178">
    <property type="entry name" value="AA_TRNA_LIGASE_I"/>
    <property type="match status" value="1"/>
</dbReference>
<gene>
    <name evidence="1" type="primary">glnS</name>
    <name type="ordered locus">SSON_0634</name>
</gene>